<reference key="1">
    <citation type="journal article" date="1989" name="Mol. Gen. Genet.">
        <title>Nucleotide sequence, organization, and nature of the protein products of the carotenoid biosynthesis gene cluster of Rhodobacter capsulatus.</title>
        <authorList>
            <person name="Armstrong G.A."/>
            <person name="Alberti M."/>
            <person name="Leach F."/>
            <person name="Hearst J.E."/>
        </authorList>
    </citation>
    <scope>NUCLEOTIDE SEQUENCE [GENOMIC DNA]</scope>
    <source>
        <strain>ATCC BAA-309 / NBRC 16581 / SB1003</strain>
    </source>
</reference>
<reference key="2">
    <citation type="journal article" date="2010" name="J. Bacteriol.">
        <title>Complete genome sequence of the photosynthetic purple nonsulfur bacterium Rhodobacter capsulatus SB 1003.</title>
        <authorList>
            <person name="Strnad H."/>
            <person name="Lapidus A."/>
            <person name="Paces J."/>
            <person name="Ulbrich P."/>
            <person name="Vlcek C."/>
            <person name="Paces V."/>
            <person name="Haselkorn R."/>
        </authorList>
    </citation>
    <scope>NUCLEOTIDE SEQUENCE [LARGE SCALE GENOMIC DNA]</scope>
    <source>
        <strain>ATCC BAA-309 / NBRC 16581 / SB1003</strain>
    </source>
</reference>
<reference key="3">
    <citation type="journal article" date="1990" name="J. Biol. Chem.">
        <title>Carotenoid desaturases from Rhodobacter capsulatus and Neurospora crassa are structurally and functionally conserved and contain domains homologous to flavoprotein disulfide oxidoreductases.</title>
        <authorList>
            <person name="Bartley G.E."/>
            <person name="Schmidhauser T.J."/>
            <person name="Yanofsky C."/>
            <person name="Scolnik P.A."/>
        </authorList>
    </citation>
    <scope>FUNCTION</scope>
</reference>
<feature type="chain" id="PRO_0000067683" description="Hydroxyneurosporene desaturase">
    <location>
        <begin position="1"/>
        <end position="494"/>
    </location>
</feature>
<feature type="sequence conflict" description="In Ref. 1; CAA77544/CAA36537." evidence="1" ref="1">
    <original>G</original>
    <variation>R</variation>
    <location>
        <position position="13"/>
    </location>
</feature>
<evidence type="ECO:0000305" key="1"/>
<evidence type="ECO:0000305" key="2">
    <source>
    </source>
</evidence>
<proteinExistence type="inferred from homology"/>
<sequence length="494" mass="52213">MRSETDVVVIGAGMGGLAAAIGAAAAGLRVTVVEAGDAPGGKARAVPTPGGPADTGPTVLTMRHVLDALFAACGTRAEEHLTLIPLPRLARHFWPDGSSLDLFTDTEANIEAIRAFAGDKEAAAFRRFDHLTTGLWEAFHRSVIAAPKPDLWRIAAATVTRPQLWPALRPGLTMRDLLAHHFKDPRLAQLFGRYATYVGGRPGATPAVLSLIWQAEVQGVWAIREGMHGVAAALARVAEAKGVRFHYGAKAKRIVRKEGRVTAVEIETGVSIPCGACIFNGDPGALRDGLLGDAARASMEKSPRPAPSLSAWVWAFGATPIGVDLAHHNVFFTADPELEFGPIGAGEMPEEPTLYICAQDREMQAPVPEIERFEIIMNGPAGHQPFPQEEAQCRARTFPMLAAMGLTFSPDPETRALTTPALLSRRFPGSLGAIYGGSPEGTLATFRRPLARTGLKGLYLAGGGTHPGAGVPMALTSGTHAARALLADRISAAK</sequence>
<accession>P17059</accession>
<accession>D5AP76</accession>
<protein>
    <recommendedName>
        <fullName>Hydroxyneurosporene desaturase</fullName>
        <shortName>HND</shortName>
    </recommendedName>
    <alternativeName>
        <fullName>1-hydroxycarotenoid 3,4-dehydrogenase</fullName>
    </alternativeName>
    <alternativeName>
        <fullName>1-hydroxycarotenoid 3,4-desaturase</fullName>
        <ecNumber>1.3.99.27</ecNumber>
    </alternativeName>
</protein>
<name>CRTD_RHOCB</name>
<dbReference type="EC" id="1.3.99.27"/>
<dbReference type="EMBL" id="X52291">
    <property type="protein sequence ID" value="CAA36537.1"/>
    <property type="molecule type" value="Genomic_DNA"/>
</dbReference>
<dbReference type="EMBL" id="Z11165">
    <property type="protein sequence ID" value="CAA77544.1"/>
    <property type="molecule type" value="Genomic_DNA"/>
</dbReference>
<dbReference type="EMBL" id="CP001312">
    <property type="protein sequence ID" value="ADE84448.1"/>
    <property type="molecule type" value="Genomic_DNA"/>
</dbReference>
<dbReference type="PIR" id="S04406">
    <property type="entry name" value="S04406"/>
</dbReference>
<dbReference type="RefSeq" id="WP_013066427.1">
    <property type="nucleotide sequence ID" value="NC_014034.1"/>
</dbReference>
<dbReference type="SMR" id="P17059"/>
<dbReference type="STRING" id="272942.RCAP_rcc00683"/>
<dbReference type="GeneID" id="31489629"/>
<dbReference type="KEGG" id="rcp:RCAP_rcc00683"/>
<dbReference type="eggNOG" id="COG1233">
    <property type="taxonomic scope" value="Bacteria"/>
</dbReference>
<dbReference type="HOGENOM" id="CLU_019722_2_1_5"/>
<dbReference type="OrthoDB" id="9774675at2"/>
<dbReference type="BioCyc" id="MetaCyc:MONOMER-14932"/>
<dbReference type="UniPathway" id="UPA00683"/>
<dbReference type="Proteomes" id="UP000002361">
    <property type="component" value="Chromosome"/>
</dbReference>
<dbReference type="GO" id="GO:0016627">
    <property type="term" value="F:oxidoreductase activity, acting on the CH-CH group of donors"/>
    <property type="evidence" value="ECO:0007669"/>
    <property type="project" value="UniProtKB-ARBA"/>
</dbReference>
<dbReference type="GO" id="GO:0016117">
    <property type="term" value="P:carotenoid biosynthetic process"/>
    <property type="evidence" value="ECO:0007669"/>
    <property type="project" value="UniProtKB-KW"/>
</dbReference>
<dbReference type="GO" id="GO:0015995">
    <property type="term" value="P:chlorophyll biosynthetic process"/>
    <property type="evidence" value="ECO:0007669"/>
    <property type="project" value="UniProtKB-KW"/>
</dbReference>
<dbReference type="GO" id="GO:0015979">
    <property type="term" value="P:photosynthesis"/>
    <property type="evidence" value="ECO:0007669"/>
    <property type="project" value="UniProtKB-KW"/>
</dbReference>
<dbReference type="Gene3D" id="3.50.50.60">
    <property type="entry name" value="FAD/NAD(P)-binding domain"/>
    <property type="match status" value="2"/>
</dbReference>
<dbReference type="InterPro" id="IPR002937">
    <property type="entry name" value="Amino_oxidase"/>
</dbReference>
<dbReference type="InterPro" id="IPR054841">
    <property type="entry name" value="carotdesatCrtD"/>
</dbReference>
<dbReference type="InterPro" id="IPR014105">
    <property type="entry name" value="Carotenoid/retinoid_OxRdtase"/>
</dbReference>
<dbReference type="InterPro" id="IPR036188">
    <property type="entry name" value="FAD/NAD-bd_sf"/>
</dbReference>
<dbReference type="InterPro" id="IPR008150">
    <property type="entry name" value="Phytoene_DH_bac_CS"/>
</dbReference>
<dbReference type="NCBIfam" id="NF045637">
    <property type="entry name" value="carotdesatCrtDProt"/>
    <property type="match status" value="1"/>
</dbReference>
<dbReference type="NCBIfam" id="TIGR02734">
    <property type="entry name" value="crtI_fam"/>
    <property type="match status" value="1"/>
</dbReference>
<dbReference type="PANTHER" id="PTHR43734:SF7">
    <property type="entry name" value="4,4'-DIAPONEUROSPORENE OXYGENASE"/>
    <property type="match status" value="1"/>
</dbReference>
<dbReference type="PANTHER" id="PTHR43734">
    <property type="entry name" value="PHYTOENE DESATURASE"/>
    <property type="match status" value="1"/>
</dbReference>
<dbReference type="Pfam" id="PF01593">
    <property type="entry name" value="Amino_oxidase"/>
    <property type="match status" value="1"/>
</dbReference>
<dbReference type="SUPFAM" id="SSF51905">
    <property type="entry name" value="FAD/NAD(P)-binding domain"/>
    <property type="match status" value="1"/>
</dbReference>
<dbReference type="PROSITE" id="PS00982">
    <property type="entry name" value="PHYTOENE_DH"/>
    <property type="match status" value="1"/>
</dbReference>
<organism>
    <name type="scientific">Rhodobacter capsulatus (strain ATCC BAA-309 / NBRC 16581 / SB1003)</name>
    <dbReference type="NCBI Taxonomy" id="272942"/>
    <lineage>
        <taxon>Bacteria</taxon>
        <taxon>Pseudomonadati</taxon>
        <taxon>Pseudomonadota</taxon>
        <taxon>Alphaproteobacteria</taxon>
        <taxon>Rhodobacterales</taxon>
        <taxon>Rhodobacter group</taxon>
        <taxon>Rhodobacter</taxon>
    </lineage>
</organism>
<gene>
    <name type="primary">crtD</name>
    <name type="ordered locus">RCAP_rcc00683</name>
</gene>
<comment type="function">
    <text evidence="2">Catalyzes the introduction of C-3,4 double bonds into 1-hydroxyneurosporene (1-HO-Neu) to yield demethylspheroidene (DMS).</text>
</comment>
<comment type="catalytic activity">
    <reaction>
        <text>rhodopin + A = (3E)-3,4-didehydrorhodopin + AH2</text>
        <dbReference type="Rhea" id="RHEA:30919"/>
        <dbReference type="ChEBI" id="CHEBI:13193"/>
        <dbReference type="ChEBI" id="CHEBI:17499"/>
        <dbReference type="ChEBI" id="CHEBI:35331"/>
        <dbReference type="ChEBI" id="CHEBI:62481"/>
        <dbReference type="EC" id="1.3.99.27"/>
    </reaction>
</comment>
<comment type="pathway">
    <text>Carotenoid biosynthesis; spheroidene biosynthesis.</text>
</comment>
<comment type="similarity">
    <text evidence="1">Belongs to the carotenoid/retinoid oxidoreductase family.</text>
</comment>
<keyword id="KW-0125">Carotenoid biosynthesis</keyword>
<keyword id="KW-0149">Chlorophyll biosynthesis</keyword>
<keyword id="KW-0560">Oxidoreductase</keyword>
<keyword id="KW-0602">Photosynthesis</keyword>
<keyword id="KW-1185">Reference proteome</keyword>